<reference key="1">
    <citation type="journal article" date="2004" name="Nucleic Acids Res.">
        <title>Whole genome comparisons of serotype 4b and 1/2a strains of the food-borne pathogen Listeria monocytogenes reveal new insights into the core genome components of this species.</title>
        <authorList>
            <person name="Nelson K.E."/>
            <person name="Fouts D.E."/>
            <person name="Mongodin E.F."/>
            <person name="Ravel J."/>
            <person name="DeBoy R.T."/>
            <person name="Kolonay J.F."/>
            <person name="Rasko D.A."/>
            <person name="Angiuoli S.V."/>
            <person name="Gill S.R."/>
            <person name="Paulsen I.T."/>
            <person name="Peterson J.D."/>
            <person name="White O."/>
            <person name="Nelson W.C."/>
            <person name="Nierman W.C."/>
            <person name="Beanan M.J."/>
            <person name="Brinkac L.M."/>
            <person name="Daugherty S.C."/>
            <person name="Dodson R.J."/>
            <person name="Durkin A.S."/>
            <person name="Madupu R."/>
            <person name="Haft D.H."/>
            <person name="Selengut J."/>
            <person name="Van Aken S.E."/>
            <person name="Khouri H.M."/>
            <person name="Fedorova N."/>
            <person name="Forberger H.A."/>
            <person name="Tran B."/>
            <person name="Kathariou S."/>
            <person name="Wonderling L.D."/>
            <person name="Uhlich G.A."/>
            <person name="Bayles D.O."/>
            <person name="Luchansky J.B."/>
            <person name="Fraser C.M."/>
        </authorList>
    </citation>
    <scope>NUCLEOTIDE SEQUENCE [LARGE SCALE GENOMIC DNA]</scope>
    <source>
        <strain>F2365</strain>
    </source>
</reference>
<organism>
    <name type="scientific">Listeria monocytogenes serotype 4b (strain F2365)</name>
    <dbReference type="NCBI Taxonomy" id="265669"/>
    <lineage>
        <taxon>Bacteria</taxon>
        <taxon>Bacillati</taxon>
        <taxon>Bacillota</taxon>
        <taxon>Bacilli</taxon>
        <taxon>Bacillales</taxon>
        <taxon>Listeriaceae</taxon>
        <taxon>Listeria</taxon>
    </lineage>
</organism>
<sequence length="205" mass="23282">MTERGLLIVLSGPSGVGKGTVREAVFKDPETSFDYSISMTTRLPREGEQDGVDYYFRSREVFEQAIKDGKMLEYAEYVGNYYGTPLEYVEEKLAAGVDIFLEIEVQGAMQVRKAMPEGIFIFLTPPDLSELKNRIIGRGTESMEVVEERMETAKKEIEMMASYDYAVVNDVVANAVQKIKGIVETEHLKTERVIHRYKKMLEGLQ</sequence>
<accession>Q71YI9</accession>
<comment type="function">
    <text evidence="1">Essential for recycling GMP and indirectly, cGMP.</text>
</comment>
<comment type="catalytic activity">
    <reaction evidence="1">
        <text>GMP + ATP = GDP + ADP</text>
        <dbReference type="Rhea" id="RHEA:20780"/>
        <dbReference type="ChEBI" id="CHEBI:30616"/>
        <dbReference type="ChEBI" id="CHEBI:58115"/>
        <dbReference type="ChEBI" id="CHEBI:58189"/>
        <dbReference type="ChEBI" id="CHEBI:456216"/>
        <dbReference type="EC" id="2.7.4.8"/>
    </reaction>
</comment>
<comment type="subcellular location">
    <subcellularLocation>
        <location evidence="1">Cytoplasm</location>
    </subcellularLocation>
</comment>
<comment type="similarity">
    <text evidence="1">Belongs to the guanylate kinase family.</text>
</comment>
<feature type="chain" id="PRO_0000170557" description="Guanylate kinase">
    <location>
        <begin position="1"/>
        <end position="205"/>
    </location>
</feature>
<feature type="domain" description="Guanylate kinase-like" evidence="1">
    <location>
        <begin position="5"/>
        <end position="184"/>
    </location>
</feature>
<feature type="binding site" evidence="1">
    <location>
        <begin position="12"/>
        <end position="19"/>
    </location>
    <ligand>
        <name>ATP</name>
        <dbReference type="ChEBI" id="CHEBI:30616"/>
    </ligand>
</feature>
<protein>
    <recommendedName>
        <fullName evidence="1">Guanylate kinase</fullName>
        <ecNumber evidence="1">2.7.4.8</ecNumber>
    </recommendedName>
    <alternativeName>
        <fullName evidence="1">GMP kinase</fullName>
    </alternativeName>
</protein>
<evidence type="ECO:0000255" key="1">
    <source>
        <dbReference type="HAMAP-Rule" id="MF_00328"/>
    </source>
</evidence>
<name>KGUA_LISMF</name>
<dbReference type="EC" id="2.7.4.8" evidence="1"/>
<dbReference type="EMBL" id="AE017262">
    <property type="protein sequence ID" value="AAT04625.1"/>
    <property type="molecule type" value="Genomic_DNA"/>
</dbReference>
<dbReference type="RefSeq" id="WP_003725659.1">
    <property type="nucleotide sequence ID" value="NC_002973.6"/>
</dbReference>
<dbReference type="SMR" id="Q71YI9"/>
<dbReference type="KEGG" id="lmf:LMOf2365_1855"/>
<dbReference type="HOGENOM" id="CLU_001715_1_2_9"/>
<dbReference type="GO" id="GO:0005829">
    <property type="term" value="C:cytosol"/>
    <property type="evidence" value="ECO:0007669"/>
    <property type="project" value="TreeGrafter"/>
</dbReference>
<dbReference type="GO" id="GO:0005524">
    <property type="term" value="F:ATP binding"/>
    <property type="evidence" value="ECO:0007669"/>
    <property type="project" value="UniProtKB-UniRule"/>
</dbReference>
<dbReference type="GO" id="GO:0004385">
    <property type="term" value="F:guanylate kinase activity"/>
    <property type="evidence" value="ECO:0007669"/>
    <property type="project" value="UniProtKB-UniRule"/>
</dbReference>
<dbReference type="CDD" id="cd00071">
    <property type="entry name" value="GMPK"/>
    <property type="match status" value="1"/>
</dbReference>
<dbReference type="FunFam" id="3.40.50.300:FF:000855">
    <property type="entry name" value="Guanylate kinase"/>
    <property type="match status" value="1"/>
</dbReference>
<dbReference type="FunFam" id="3.30.63.10:FF:000002">
    <property type="entry name" value="Guanylate kinase 1"/>
    <property type="match status" value="1"/>
</dbReference>
<dbReference type="Gene3D" id="3.30.63.10">
    <property type="entry name" value="Guanylate Kinase phosphate binding domain"/>
    <property type="match status" value="1"/>
</dbReference>
<dbReference type="Gene3D" id="3.40.50.300">
    <property type="entry name" value="P-loop containing nucleotide triphosphate hydrolases"/>
    <property type="match status" value="1"/>
</dbReference>
<dbReference type="HAMAP" id="MF_00328">
    <property type="entry name" value="Guanylate_kinase"/>
    <property type="match status" value="1"/>
</dbReference>
<dbReference type="InterPro" id="IPR008145">
    <property type="entry name" value="GK/Ca_channel_bsu"/>
</dbReference>
<dbReference type="InterPro" id="IPR008144">
    <property type="entry name" value="Guanylate_kin-like_dom"/>
</dbReference>
<dbReference type="InterPro" id="IPR017665">
    <property type="entry name" value="Guanylate_kinase"/>
</dbReference>
<dbReference type="InterPro" id="IPR020590">
    <property type="entry name" value="Guanylate_kinase_CS"/>
</dbReference>
<dbReference type="InterPro" id="IPR027417">
    <property type="entry name" value="P-loop_NTPase"/>
</dbReference>
<dbReference type="NCBIfam" id="TIGR03263">
    <property type="entry name" value="guanyl_kin"/>
    <property type="match status" value="1"/>
</dbReference>
<dbReference type="PANTHER" id="PTHR23117:SF13">
    <property type="entry name" value="GUANYLATE KINASE"/>
    <property type="match status" value="1"/>
</dbReference>
<dbReference type="PANTHER" id="PTHR23117">
    <property type="entry name" value="GUANYLATE KINASE-RELATED"/>
    <property type="match status" value="1"/>
</dbReference>
<dbReference type="Pfam" id="PF00625">
    <property type="entry name" value="Guanylate_kin"/>
    <property type="match status" value="1"/>
</dbReference>
<dbReference type="SMART" id="SM00072">
    <property type="entry name" value="GuKc"/>
    <property type="match status" value="1"/>
</dbReference>
<dbReference type="SUPFAM" id="SSF52540">
    <property type="entry name" value="P-loop containing nucleoside triphosphate hydrolases"/>
    <property type="match status" value="1"/>
</dbReference>
<dbReference type="PROSITE" id="PS00856">
    <property type="entry name" value="GUANYLATE_KINASE_1"/>
    <property type="match status" value="1"/>
</dbReference>
<dbReference type="PROSITE" id="PS50052">
    <property type="entry name" value="GUANYLATE_KINASE_2"/>
    <property type="match status" value="1"/>
</dbReference>
<proteinExistence type="inferred from homology"/>
<keyword id="KW-0067">ATP-binding</keyword>
<keyword id="KW-0963">Cytoplasm</keyword>
<keyword id="KW-0418">Kinase</keyword>
<keyword id="KW-0547">Nucleotide-binding</keyword>
<keyword id="KW-0808">Transferase</keyword>
<gene>
    <name evidence="1" type="primary">gmk</name>
    <name type="ordered locus">LMOf2365_1855</name>
</gene>